<keyword id="KW-0021">Allosteric enzyme</keyword>
<keyword id="KW-0328">Glycosyltransferase</keyword>
<keyword id="KW-0342">GTP-binding</keyword>
<keyword id="KW-0460">Magnesium</keyword>
<keyword id="KW-0547">Nucleotide-binding</keyword>
<keyword id="KW-1185">Reference proteome</keyword>
<keyword id="KW-0808">Transferase</keyword>
<reference key="1">
    <citation type="journal article" date="2003" name="Science">
        <title>Role of mobile DNA in the evolution of vancomycin-resistant Enterococcus faecalis.</title>
        <authorList>
            <person name="Paulsen I.T."/>
            <person name="Banerjei L."/>
            <person name="Myers G.S.A."/>
            <person name="Nelson K.E."/>
            <person name="Seshadri R."/>
            <person name="Read T.D."/>
            <person name="Fouts D.E."/>
            <person name="Eisen J.A."/>
            <person name="Gill S.R."/>
            <person name="Heidelberg J.F."/>
            <person name="Tettelin H."/>
            <person name="Dodson R.J."/>
            <person name="Umayam L.A."/>
            <person name="Brinkac L.M."/>
            <person name="Beanan M.J."/>
            <person name="Daugherty S.C."/>
            <person name="DeBoy R.T."/>
            <person name="Durkin S.A."/>
            <person name="Kolonay J.F."/>
            <person name="Madupu R."/>
            <person name="Nelson W.C."/>
            <person name="Vamathevan J.J."/>
            <person name="Tran B."/>
            <person name="Upton J."/>
            <person name="Hansen T."/>
            <person name="Shetty J."/>
            <person name="Khouri H.M."/>
            <person name="Utterback T.R."/>
            <person name="Radune D."/>
            <person name="Ketchum K.A."/>
            <person name="Dougherty B.A."/>
            <person name="Fraser C.M."/>
        </authorList>
    </citation>
    <scope>NUCLEOTIDE SEQUENCE [LARGE SCALE GENOMIC DNA]</scope>
    <source>
        <strain>ATCC 700802 / V583</strain>
    </source>
</reference>
<gene>
    <name evidence="1" type="primary">upp</name>
    <name type="ordered locus">EF_2549</name>
</gene>
<organism>
    <name type="scientific">Enterococcus faecalis (strain ATCC 700802 / V583)</name>
    <dbReference type="NCBI Taxonomy" id="226185"/>
    <lineage>
        <taxon>Bacteria</taxon>
        <taxon>Bacillati</taxon>
        <taxon>Bacillota</taxon>
        <taxon>Bacilli</taxon>
        <taxon>Lactobacillales</taxon>
        <taxon>Enterococcaceae</taxon>
        <taxon>Enterococcus</taxon>
    </lineage>
</organism>
<feature type="chain" id="PRO_0000120827" description="Uracil phosphoribosyltransferase">
    <location>
        <begin position="1"/>
        <end position="209"/>
    </location>
</feature>
<feature type="binding site" evidence="1">
    <location>
        <position position="79"/>
    </location>
    <ligand>
        <name>5-phospho-alpha-D-ribose 1-diphosphate</name>
        <dbReference type="ChEBI" id="CHEBI:58017"/>
    </ligand>
</feature>
<feature type="binding site" evidence="1">
    <location>
        <position position="104"/>
    </location>
    <ligand>
        <name>5-phospho-alpha-D-ribose 1-diphosphate</name>
        <dbReference type="ChEBI" id="CHEBI:58017"/>
    </ligand>
</feature>
<feature type="binding site" evidence="1">
    <location>
        <begin position="131"/>
        <end position="139"/>
    </location>
    <ligand>
        <name>5-phospho-alpha-D-ribose 1-diphosphate</name>
        <dbReference type="ChEBI" id="CHEBI:58017"/>
    </ligand>
</feature>
<feature type="binding site" evidence="1">
    <location>
        <position position="194"/>
    </location>
    <ligand>
        <name>uracil</name>
        <dbReference type="ChEBI" id="CHEBI:17568"/>
    </ligand>
</feature>
<feature type="binding site" evidence="1">
    <location>
        <begin position="199"/>
        <end position="201"/>
    </location>
    <ligand>
        <name>uracil</name>
        <dbReference type="ChEBI" id="CHEBI:17568"/>
    </ligand>
</feature>
<feature type="binding site" evidence="1">
    <location>
        <position position="200"/>
    </location>
    <ligand>
        <name>5-phospho-alpha-D-ribose 1-diphosphate</name>
        <dbReference type="ChEBI" id="CHEBI:58017"/>
    </ligand>
</feature>
<name>UPP_ENTFA</name>
<comment type="function">
    <text evidence="1">Catalyzes the conversion of uracil and 5-phospho-alpha-D-ribose 1-diphosphate (PRPP) to UMP and diphosphate.</text>
</comment>
<comment type="catalytic activity">
    <reaction evidence="1">
        <text>UMP + diphosphate = 5-phospho-alpha-D-ribose 1-diphosphate + uracil</text>
        <dbReference type="Rhea" id="RHEA:13017"/>
        <dbReference type="ChEBI" id="CHEBI:17568"/>
        <dbReference type="ChEBI" id="CHEBI:33019"/>
        <dbReference type="ChEBI" id="CHEBI:57865"/>
        <dbReference type="ChEBI" id="CHEBI:58017"/>
        <dbReference type="EC" id="2.4.2.9"/>
    </reaction>
</comment>
<comment type="cofactor">
    <cofactor evidence="1">
        <name>Mg(2+)</name>
        <dbReference type="ChEBI" id="CHEBI:18420"/>
    </cofactor>
    <text evidence="1">Binds 1 Mg(2+) ion per subunit. The magnesium is bound as Mg-PRPP.</text>
</comment>
<comment type="activity regulation">
    <text evidence="1">Allosterically activated by GTP.</text>
</comment>
<comment type="pathway">
    <text evidence="1">Pyrimidine metabolism; UMP biosynthesis via salvage pathway; UMP from uracil: step 1/1.</text>
</comment>
<comment type="similarity">
    <text evidence="1">Belongs to the UPRTase family.</text>
</comment>
<accession>Q831G0</accession>
<proteinExistence type="inferred from homology"/>
<protein>
    <recommendedName>
        <fullName evidence="1">Uracil phosphoribosyltransferase</fullName>
        <ecNumber evidence="1">2.4.2.9</ecNumber>
    </recommendedName>
    <alternativeName>
        <fullName evidence="1">UMP pyrophosphorylase</fullName>
    </alternativeName>
    <alternativeName>
        <fullName evidence="1">UPRTase</fullName>
    </alternativeName>
</protein>
<sequence>MGKFQVIDHPLIQHKLTMIREKNCGTKVFREVVNEIAMLMAYEVSRDMPLEDVVIETPMGKSTQKTLSGKKVAIIPILRAGIGMVDGILELIPAAKVGHVGLYRDEETLQPHEYFVKLPEDIASRQLFVVDPMLATGGSAIMAIDSLKERGASNIKFVCLVAVPEGVKALQEAHPDVDIYTAALDERLNEDGYIVPGLGDAGDRLFGTK</sequence>
<evidence type="ECO:0000255" key="1">
    <source>
        <dbReference type="HAMAP-Rule" id="MF_01218"/>
    </source>
</evidence>
<dbReference type="EC" id="2.4.2.9" evidence="1"/>
<dbReference type="EMBL" id="AE016830">
    <property type="protein sequence ID" value="AAO82262.1"/>
    <property type="molecule type" value="Genomic_DNA"/>
</dbReference>
<dbReference type="RefSeq" id="NP_816192.1">
    <property type="nucleotide sequence ID" value="NC_004668.1"/>
</dbReference>
<dbReference type="RefSeq" id="WP_002356624.1">
    <property type="nucleotide sequence ID" value="NZ_KE136528.1"/>
</dbReference>
<dbReference type="SMR" id="Q831G0"/>
<dbReference type="STRING" id="226185.EF_2549"/>
<dbReference type="EnsemblBacteria" id="AAO82262">
    <property type="protein sequence ID" value="AAO82262"/>
    <property type="gene ID" value="EF_2549"/>
</dbReference>
<dbReference type="GeneID" id="60894557"/>
<dbReference type="KEGG" id="efa:EF2549"/>
<dbReference type="PATRIC" id="fig|226185.45.peg.1001"/>
<dbReference type="eggNOG" id="COG0035">
    <property type="taxonomic scope" value="Bacteria"/>
</dbReference>
<dbReference type="HOGENOM" id="CLU_067096_2_2_9"/>
<dbReference type="UniPathway" id="UPA00574">
    <property type="reaction ID" value="UER00636"/>
</dbReference>
<dbReference type="Proteomes" id="UP000001415">
    <property type="component" value="Chromosome"/>
</dbReference>
<dbReference type="GO" id="GO:0005525">
    <property type="term" value="F:GTP binding"/>
    <property type="evidence" value="ECO:0007669"/>
    <property type="project" value="UniProtKB-KW"/>
</dbReference>
<dbReference type="GO" id="GO:0000287">
    <property type="term" value="F:magnesium ion binding"/>
    <property type="evidence" value="ECO:0007669"/>
    <property type="project" value="UniProtKB-UniRule"/>
</dbReference>
<dbReference type="GO" id="GO:0004845">
    <property type="term" value="F:uracil phosphoribosyltransferase activity"/>
    <property type="evidence" value="ECO:0007669"/>
    <property type="project" value="UniProtKB-UniRule"/>
</dbReference>
<dbReference type="GO" id="GO:0044206">
    <property type="term" value="P:UMP salvage"/>
    <property type="evidence" value="ECO:0007669"/>
    <property type="project" value="UniProtKB-UniRule"/>
</dbReference>
<dbReference type="GO" id="GO:0006223">
    <property type="term" value="P:uracil salvage"/>
    <property type="evidence" value="ECO:0007669"/>
    <property type="project" value="InterPro"/>
</dbReference>
<dbReference type="CDD" id="cd06223">
    <property type="entry name" value="PRTases_typeI"/>
    <property type="match status" value="1"/>
</dbReference>
<dbReference type="FunFam" id="3.40.50.2020:FF:000003">
    <property type="entry name" value="Uracil phosphoribosyltransferase"/>
    <property type="match status" value="1"/>
</dbReference>
<dbReference type="Gene3D" id="3.40.50.2020">
    <property type="match status" value="1"/>
</dbReference>
<dbReference type="HAMAP" id="MF_01218_B">
    <property type="entry name" value="Upp_B"/>
    <property type="match status" value="1"/>
</dbReference>
<dbReference type="InterPro" id="IPR000836">
    <property type="entry name" value="PRibTrfase_dom"/>
</dbReference>
<dbReference type="InterPro" id="IPR029057">
    <property type="entry name" value="PRTase-like"/>
</dbReference>
<dbReference type="InterPro" id="IPR034332">
    <property type="entry name" value="Upp_B"/>
</dbReference>
<dbReference type="InterPro" id="IPR050054">
    <property type="entry name" value="UPRTase/APRTase"/>
</dbReference>
<dbReference type="InterPro" id="IPR005765">
    <property type="entry name" value="Ura_phspho_trans"/>
</dbReference>
<dbReference type="NCBIfam" id="NF001097">
    <property type="entry name" value="PRK00129.1"/>
    <property type="match status" value="1"/>
</dbReference>
<dbReference type="NCBIfam" id="TIGR01091">
    <property type="entry name" value="upp"/>
    <property type="match status" value="1"/>
</dbReference>
<dbReference type="PANTHER" id="PTHR32315">
    <property type="entry name" value="ADENINE PHOSPHORIBOSYLTRANSFERASE"/>
    <property type="match status" value="1"/>
</dbReference>
<dbReference type="PANTHER" id="PTHR32315:SF4">
    <property type="entry name" value="URACIL PHOSPHORIBOSYLTRANSFERASE, CHLOROPLASTIC"/>
    <property type="match status" value="1"/>
</dbReference>
<dbReference type="Pfam" id="PF14681">
    <property type="entry name" value="UPRTase"/>
    <property type="match status" value="1"/>
</dbReference>
<dbReference type="SUPFAM" id="SSF53271">
    <property type="entry name" value="PRTase-like"/>
    <property type="match status" value="1"/>
</dbReference>